<sequence length="872" mass="96073">MATRFPKFSQDLAQDPTTRRIWYGIATAHDFESHDGMTEESLYQKLFATHFGHLAIIFLWSSGNLFHIAWQGNFEQWVSNPTGVVPIAHAIWDPHFGKGAVEAFTPEGGAGPVNAAYSGLYYLYYTLGMRFNSDLYQGSIFLMVLATVFLIAGWLHLQPRFRPSLAWFKNAESRLNHHLSALFGVSSLAFAGHMIHVAIPAARGQRVDWSNFLNTLPHPAGLAPFFTGNWGVYADPQAGPPILTFIGGLNPATGTLWLTDIAHHHLAIAVIFIIAGHMYRTNFGIGHSIKEILDAHKGPLTGEGHRGLYDTINNSLHFQLGLALASLGVVTSLVAQHTYALPAYFYMPQDHTTMAALYTHHQYIAGFLMVGAFAHGAIFFVRDYDPKANENNVLARMLEHKEALISHLSWVSLFLGFHTLGLYVHNDVMLAFGRPEDQLLIEPVFAQFVQVQSGKIIEGIPALFGGPGVTAPGEFLTGWLGSVNANNSPIFLPIGPGDFLVHHAIALGLHTTTLILVKGALDARGSKLMPDKKDFGFAFPCDGPGRGGTCDISAWDAFYLAVFWMLNTIGWVTFYWHWKWISIWGDNVAQFNASSTYLMGWLRDYLWANSAPLIGGYSPSGGTNALSVWAWMFLFGHLVWATGFMFLIAWRGYWQELIETLVWAHERTPLANLVRWKDKPVAMSIVQGRLVGLAHFTIGYILTYAAFLIASTAALYPNGPAAFTPAISAEQAKGVLSEFKAKPVPGGVMLLLPENIVFDFDKSSVKLDADPALNRVVGVIQFYGSEPVEILGHTDSLGEDAYNQKLSEERASAVKAFFEKKGIEAERLTAKGYGETKPVAPNAKPDGSDNPDGRQQNRRVEILIKTEVVPVS</sequence>
<organism>
    <name type="scientific">Gloeobacter violaceus (strain ATCC 29082 / PCC 7421)</name>
    <dbReference type="NCBI Taxonomy" id="251221"/>
    <lineage>
        <taxon>Bacteria</taxon>
        <taxon>Bacillati</taxon>
        <taxon>Cyanobacteriota</taxon>
        <taxon>Cyanophyceae</taxon>
        <taxon>Gloeobacterales</taxon>
        <taxon>Gloeobacteraceae</taxon>
        <taxon>Gloeobacter</taxon>
    </lineage>
</organism>
<protein>
    <recommendedName>
        <fullName>Photosystem I P700 chlorophyll a apoprotein A2</fullName>
        <ecNumber>1.97.1.12</ecNumber>
    </recommendedName>
    <alternativeName>
        <fullName>PsaB</fullName>
    </alternativeName>
</protein>
<reference key="1">
    <citation type="journal article" date="2003" name="DNA Res.">
        <title>Complete genome structure of Gloeobacter violaceus PCC 7421, a cyanobacterium that lacks thylakoids.</title>
        <authorList>
            <person name="Nakamura Y."/>
            <person name="Kaneko T."/>
            <person name="Sato S."/>
            <person name="Mimuro M."/>
            <person name="Miyashita H."/>
            <person name="Tsuchiya T."/>
            <person name="Sasamoto S."/>
            <person name="Watanabe A."/>
            <person name="Kawashima K."/>
            <person name="Kishida Y."/>
            <person name="Kiyokawa C."/>
            <person name="Kohara M."/>
            <person name="Matsumoto M."/>
            <person name="Matsuno A."/>
            <person name="Nakazaki N."/>
            <person name="Shimpo S."/>
            <person name="Takeuchi C."/>
            <person name="Yamada M."/>
            <person name="Tabata S."/>
        </authorList>
    </citation>
    <scope>NUCLEOTIDE SEQUENCE [LARGE SCALE GENOMIC DNA]</scope>
    <source>
        <strain>ATCC 29082 / PCC 7421</strain>
    </source>
</reference>
<reference key="2">
    <citation type="journal article" date="2004" name="FEBS Lett.">
        <title>Unique constitution of photosystem I with a novel subunit in the cyanobacterium Gloeobacter violaceus PCC 7421.</title>
        <authorList>
            <person name="Inoue H."/>
            <person name="Tsuchiya T."/>
            <person name="Satoh S."/>
            <person name="Miyashita H."/>
            <person name="Kaneko T."/>
            <person name="Tabata S."/>
            <person name="Tanaka A."/>
            <person name="Mimuro M."/>
        </authorList>
    </citation>
    <scope>IDENTIFICATION BY MASS SPECTROMETRY</scope>
    <scope>CHARACTERIZATION OF PHOTOSYSTEM I</scope>
    <source>
        <strain>ATCC 29082 / PCC 7421</strain>
    </source>
</reference>
<name>PSAB_GLOVI</name>
<dbReference type="EC" id="1.97.1.12"/>
<dbReference type="EMBL" id="BA000045">
    <property type="protein sequence ID" value="BAC91380.1"/>
    <property type="molecule type" value="Genomic_DNA"/>
</dbReference>
<dbReference type="RefSeq" id="NP_926385.1">
    <property type="nucleotide sequence ID" value="NC_005125.1"/>
</dbReference>
<dbReference type="RefSeq" id="WP_011143428.1">
    <property type="nucleotide sequence ID" value="NC_005125.1"/>
</dbReference>
<dbReference type="PDB" id="7F4V">
    <property type="method" value="EM"/>
    <property type="resolution" value="2.04 A"/>
    <property type="chains" value="aB/bB/cB=1-872"/>
</dbReference>
<dbReference type="PDBsum" id="7F4V"/>
<dbReference type="EMDB" id="EMD-31455"/>
<dbReference type="SMR" id="Q7NFT5"/>
<dbReference type="STRING" id="251221.gene:10760951"/>
<dbReference type="EnsemblBacteria" id="BAC91380">
    <property type="protein sequence ID" value="BAC91380"/>
    <property type="gene ID" value="BAC91380"/>
</dbReference>
<dbReference type="KEGG" id="gvi:glr3439"/>
<dbReference type="PATRIC" id="fig|251221.4.peg.3471"/>
<dbReference type="eggNOG" id="COG2885">
    <property type="taxonomic scope" value="Bacteria"/>
</dbReference>
<dbReference type="HOGENOM" id="CLU_016126_1_0_3"/>
<dbReference type="InParanoid" id="Q7NFT5"/>
<dbReference type="OrthoDB" id="499313at2"/>
<dbReference type="PhylomeDB" id="Q7NFT5"/>
<dbReference type="Proteomes" id="UP000000557">
    <property type="component" value="Chromosome"/>
</dbReference>
<dbReference type="GO" id="GO:0009522">
    <property type="term" value="C:photosystem I"/>
    <property type="evidence" value="ECO:0007669"/>
    <property type="project" value="UniProtKB-KW"/>
</dbReference>
<dbReference type="GO" id="GO:0005886">
    <property type="term" value="C:plasma membrane"/>
    <property type="evidence" value="ECO:0007669"/>
    <property type="project" value="UniProtKB-SubCell"/>
</dbReference>
<dbReference type="GO" id="GO:0051539">
    <property type="term" value="F:4 iron, 4 sulfur cluster binding"/>
    <property type="evidence" value="ECO:0007669"/>
    <property type="project" value="UniProtKB-KW"/>
</dbReference>
<dbReference type="GO" id="GO:0016168">
    <property type="term" value="F:chlorophyll binding"/>
    <property type="evidence" value="ECO:0007669"/>
    <property type="project" value="UniProtKB-KW"/>
</dbReference>
<dbReference type="GO" id="GO:0046872">
    <property type="term" value="F:metal ion binding"/>
    <property type="evidence" value="ECO:0007669"/>
    <property type="project" value="UniProtKB-KW"/>
</dbReference>
<dbReference type="GO" id="GO:0016491">
    <property type="term" value="F:oxidoreductase activity"/>
    <property type="evidence" value="ECO:0007669"/>
    <property type="project" value="UniProtKB-KW"/>
</dbReference>
<dbReference type="GO" id="GO:0015979">
    <property type="term" value="P:photosynthesis"/>
    <property type="evidence" value="ECO:0007669"/>
    <property type="project" value="UniProtKB-KW"/>
</dbReference>
<dbReference type="CDD" id="cd07185">
    <property type="entry name" value="OmpA_C-like"/>
    <property type="match status" value="1"/>
</dbReference>
<dbReference type="FunFam" id="1.20.1130.10:FF:000001">
    <property type="entry name" value="Photosystem I P700 chlorophyll a apoprotein A2"/>
    <property type="match status" value="1"/>
</dbReference>
<dbReference type="Gene3D" id="3.30.1330.60">
    <property type="entry name" value="OmpA-like domain"/>
    <property type="match status" value="1"/>
</dbReference>
<dbReference type="Gene3D" id="1.20.1130.10">
    <property type="entry name" value="Photosystem I PsaA/PsaB"/>
    <property type="match status" value="1"/>
</dbReference>
<dbReference type="InterPro" id="IPR006664">
    <property type="entry name" value="OMP_bac"/>
</dbReference>
<dbReference type="InterPro" id="IPR006665">
    <property type="entry name" value="OmpA-like"/>
</dbReference>
<dbReference type="InterPro" id="IPR036737">
    <property type="entry name" value="OmpA-like_sf"/>
</dbReference>
<dbReference type="InterPro" id="IPR001280">
    <property type="entry name" value="PSI_PsaA/B"/>
</dbReference>
<dbReference type="InterPro" id="IPR020586">
    <property type="entry name" value="PSI_PsaA/B_CS"/>
</dbReference>
<dbReference type="InterPro" id="IPR036408">
    <property type="entry name" value="PSI_PsaA/B_sf"/>
</dbReference>
<dbReference type="InterPro" id="IPR006244">
    <property type="entry name" value="PSI_PsaB"/>
</dbReference>
<dbReference type="NCBIfam" id="TIGR01336">
    <property type="entry name" value="psaB"/>
    <property type="match status" value="1"/>
</dbReference>
<dbReference type="PANTHER" id="PTHR30128">
    <property type="entry name" value="OUTER MEMBRANE PROTEIN, OMPA-RELATED"/>
    <property type="match status" value="1"/>
</dbReference>
<dbReference type="PANTHER" id="PTHR30128:SF19">
    <property type="entry name" value="PHOTOSYSTEM I P700 CHLOROPHYLL A APOPROTEIN A1-RELATED"/>
    <property type="match status" value="1"/>
</dbReference>
<dbReference type="Pfam" id="PF00691">
    <property type="entry name" value="OmpA"/>
    <property type="match status" value="1"/>
</dbReference>
<dbReference type="Pfam" id="PF00223">
    <property type="entry name" value="PsaA_PsaB"/>
    <property type="match status" value="1"/>
</dbReference>
<dbReference type="PRINTS" id="PR01021">
    <property type="entry name" value="OMPADOMAIN"/>
</dbReference>
<dbReference type="PRINTS" id="PR00257">
    <property type="entry name" value="PHOTSYSPSAAB"/>
</dbReference>
<dbReference type="SUPFAM" id="SSF103088">
    <property type="entry name" value="OmpA-like"/>
    <property type="match status" value="1"/>
</dbReference>
<dbReference type="SUPFAM" id="SSF81558">
    <property type="entry name" value="Photosystem I subunits PsaA/PsaB"/>
    <property type="match status" value="1"/>
</dbReference>
<dbReference type="PROSITE" id="PS51123">
    <property type="entry name" value="OMPA_2"/>
    <property type="match status" value="1"/>
</dbReference>
<dbReference type="PROSITE" id="PS00419">
    <property type="entry name" value="PHOTOSYSTEM_I_PSAAB"/>
    <property type="match status" value="1"/>
</dbReference>
<proteinExistence type="evidence at protein level"/>
<accession>Q7NFT5</accession>
<keyword id="KW-0002">3D-structure</keyword>
<keyword id="KW-0004">4Fe-4S</keyword>
<keyword id="KW-0997">Cell inner membrane</keyword>
<keyword id="KW-1003">Cell membrane</keyword>
<keyword id="KW-0148">Chlorophyll</keyword>
<keyword id="KW-0157">Chromophore</keyword>
<keyword id="KW-0249">Electron transport</keyword>
<keyword id="KW-0408">Iron</keyword>
<keyword id="KW-0411">Iron-sulfur</keyword>
<keyword id="KW-0460">Magnesium</keyword>
<keyword id="KW-0472">Membrane</keyword>
<keyword id="KW-0479">Metal-binding</keyword>
<keyword id="KW-0560">Oxidoreductase</keyword>
<keyword id="KW-0602">Photosynthesis</keyword>
<keyword id="KW-0603">Photosystem I</keyword>
<keyword id="KW-1185">Reference proteome</keyword>
<keyword id="KW-0812">Transmembrane</keyword>
<keyword id="KW-1133">Transmembrane helix</keyword>
<keyword id="KW-0813">Transport</keyword>
<evidence type="ECO:0000250" key="1"/>
<evidence type="ECO:0000255" key="2"/>
<evidence type="ECO:0000255" key="3">
    <source>
        <dbReference type="PROSITE-ProRule" id="PRU00473"/>
    </source>
</evidence>
<evidence type="ECO:0000256" key="4">
    <source>
        <dbReference type="SAM" id="MobiDB-lite"/>
    </source>
</evidence>
<evidence type="ECO:0000305" key="5"/>
<evidence type="ECO:0000305" key="6">
    <source>
    </source>
</evidence>
<gene>
    <name type="primary">psaB</name>
    <name type="ordered locus">glr3439</name>
</gene>
<feature type="chain" id="PRO_0000088644" description="Photosystem I P700 chlorophyll a apoprotein A2">
    <location>
        <begin position="1"/>
        <end position="872"/>
    </location>
</feature>
<feature type="transmembrane region" description="Helical; Name=I" evidence="2">
    <location>
        <begin position="46"/>
        <end position="69"/>
    </location>
</feature>
<feature type="transmembrane region" description="Helical; Name=II" evidence="2">
    <location>
        <begin position="135"/>
        <end position="158"/>
    </location>
</feature>
<feature type="transmembrane region" description="Helical; Name=III" evidence="2">
    <location>
        <begin position="175"/>
        <end position="199"/>
    </location>
</feature>
<feature type="transmembrane region" description="Helical; Name=IV" evidence="2">
    <location>
        <begin position="261"/>
        <end position="279"/>
    </location>
</feature>
<feature type="transmembrane region" description="Helical; Name=V" evidence="2">
    <location>
        <begin position="316"/>
        <end position="339"/>
    </location>
</feature>
<feature type="transmembrane region" description="Helical; Name=VI" evidence="2">
    <location>
        <begin position="355"/>
        <end position="381"/>
    </location>
</feature>
<feature type="transmembrane region" description="Helical; Name=VII" evidence="2">
    <location>
        <begin position="403"/>
        <end position="425"/>
    </location>
</feature>
<feature type="transmembrane region" description="Helical; Name=VIII" evidence="2">
    <location>
        <begin position="499"/>
        <end position="517"/>
    </location>
</feature>
<feature type="transmembrane region" description="Helical; Name=IX" evidence="2">
    <location>
        <begin position="557"/>
        <end position="578"/>
    </location>
</feature>
<feature type="transmembrane region" description="Helical; Name=X" evidence="2">
    <location>
        <begin position="626"/>
        <end position="648"/>
    </location>
</feature>
<feature type="transmembrane region" description="Helical; Name=XI" evidence="2">
    <location>
        <begin position="690"/>
        <end position="710"/>
    </location>
</feature>
<feature type="domain" description="OmpA-like" evidence="3">
    <location>
        <begin position="745"/>
        <end position="868"/>
    </location>
</feature>
<feature type="region of interest" description="Photosystem I P700 chlorophyll a apoprotein A2">
    <location>
        <begin position="1"/>
        <end position="717"/>
    </location>
</feature>
<feature type="region of interest" description="Disordered" evidence="4">
    <location>
        <begin position="829"/>
        <end position="861"/>
    </location>
</feature>
<feature type="binding site" evidence="1">
    <location>
        <position position="541"/>
    </location>
    <ligand>
        <name>[4Fe-4S] cluster</name>
        <dbReference type="ChEBI" id="CHEBI:49883"/>
        <note>ligand shared between dimeric partners</note>
    </ligand>
</feature>
<feature type="binding site" evidence="1">
    <location>
        <position position="550"/>
    </location>
    <ligand>
        <name>[4Fe-4S] cluster</name>
        <dbReference type="ChEBI" id="CHEBI:49883"/>
        <note>ligand shared between dimeric partners</note>
    </ligand>
</feature>
<feature type="binding site" description="axial binding residue" evidence="1">
    <location>
        <position position="637"/>
    </location>
    <ligand>
        <name>chlorophyll a</name>
        <dbReference type="ChEBI" id="CHEBI:58416"/>
        <label>B1</label>
    </ligand>
    <ligandPart>
        <name>Mg</name>
        <dbReference type="ChEBI" id="CHEBI:25107"/>
    </ligandPart>
</feature>
<feature type="binding site" description="axial binding residue" evidence="1">
    <location>
        <position position="645"/>
    </location>
    <ligand>
        <name>chlorophyll a</name>
        <dbReference type="ChEBI" id="CHEBI:58416"/>
        <label>B3</label>
    </ligand>
    <ligandPart>
        <name>Mg</name>
        <dbReference type="ChEBI" id="CHEBI:25107"/>
    </ligandPart>
</feature>
<feature type="binding site" evidence="1">
    <location>
        <position position="653"/>
    </location>
    <ligand>
        <name>chlorophyll a</name>
        <dbReference type="ChEBI" id="CHEBI:58416"/>
        <label>B3</label>
    </ligand>
</feature>
<feature type="binding site" evidence="1">
    <location>
        <position position="654"/>
    </location>
    <ligand>
        <name>phylloquinone</name>
        <dbReference type="ChEBI" id="CHEBI:18067"/>
        <label>B</label>
    </ligand>
</feature>
<comment type="function">
    <text>PsaA and PsaB bind P700, the primary electron donor of photosystem I (PSI), as well as the electron acceptors A0, A1 and FX. PSI is a plastocyanin/cytochrome c6-ferredoxin oxidoreductase, converting photonic excitation into a charge separation, which transfers an electron from the donor P700 chlorophyll pair to the spectroscopically characterized acceptors A0, A1, FX, FA and FB in turn. Oxidized P700 is reduced on the lumenal side of the thylakoid membrane by plastocyanin or cytochrome c6.</text>
</comment>
<comment type="catalytic activity">
    <reaction>
        <text>reduced [plastocyanin] + hnu + oxidized [2Fe-2S]-[ferredoxin] = oxidized [plastocyanin] + reduced [2Fe-2S]-[ferredoxin]</text>
        <dbReference type="Rhea" id="RHEA:30407"/>
        <dbReference type="Rhea" id="RHEA-COMP:10000"/>
        <dbReference type="Rhea" id="RHEA-COMP:10001"/>
        <dbReference type="Rhea" id="RHEA-COMP:10039"/>
        <dbReference type="Rhea" id="RHEA-COMP:10040"/>
        <dbReference type="ChEBI" id="CHEBI:29036"/>
        <dbReference type="ChEBI" id="CHEBI:30212"/>
        <dbReference type="ChEBI" id="CHEBI:33737"/>
        <dbReference type="ChEBI" id="CHEBI:33738"/>
        <dbReference type="ChEBI" id="CHEBI:49552"/>
        <dbReference type="EC" id="1.97.1.12"/>
    </reaction>
</comment>
<comment type="cofactor">
    <text evidence="1">PSI electron transfer chain: 5 chlorophyll a, 1 chlorophyll a', 2 phylloquinones and 3 4Fe-4S clusters. PSI core antenna: 90 chlorophyll a, 22 carotenoids, 3 phospholipids and 1 galactolipid. P700 is a chlorophyll a/chlorophyll a' dimer, A0 is one or more chlorophyll a, A1 is one or both phylloquinones and FX is a shared 4Fe-4S iron-sulfur center.</text>
</comment>
<comment type="subunit">
    <text>The PsaA/B heterodimer binds the P700 chlorophyll special pair and subsequent electron acceptors. PSI consists of a core antenna complex that captures photons, and an electron transfer chain that converts photonic excitation into a charge separation. The G.violaceus PSI reaction center is composed of one copy each of PsaA,B,C,D,E,F,L,M and Z, and forms trimeric complexes.</text>
</comment>
<comment type="subcellular location">
    <subcellularLocation>
        <location>Cell inner membrane</location>
        <topology>Multi-pass membrane protein</topology>
    </subcellularLocation>
</comment>
<comment type="miscellaneous">
    <text evidence="6">The C-terminal extension has been suggested to be able to bind to the peptidoglycan layer.</text>
</comment>
<comment type="similarity">
    <text evidence="5">Belongs to the PsaA/PsaB family.</text>
</comment>